<dbReference type="EMBL" id="CR860794">
    <property type="protein sequence ID" value="CAH92904.1"/>
    <property type="molecule type" value="mRNA"/>
</dbReference>
<dbReference type="RefSeq" id="NP_001126706.1">
    <property type="nucleotide sequence ID" value="NM_001133234.1"/>
</dbReference>
<dbReference type="FunCoup" id="Q5R5R2">
    <property type="interactions" value="1940"/>
</dbReference>
<dbReference type="STRING" id="9601.ENSPPYP00000009563"/>
<dbReference type="GeneID" id="100173706"/>
<dbReference type="KEGG" id="pon:100173706"/>
<dbReference type="CTD" id="63897"/>
<dbReference type="eggNOG" id="KOG4535">
    <property type="taxonomic scope" value="Eukaryota"/>
</dbReference>
<dbReference type="InParanoid" id="Q5R5R2"/>
<dbReference type="OrthoDB" id="66533at2759"/>
<dbReference type="Proteomes" id="UP000001595">
    <property type="component" value="Unplaced"/>
</dbReference>
<dbReference type="FunFam" id="1.25.10.10:FF:000171">
    <property type="entry name" value="HEAT repeat-containing protein 6"/>
    <property type="match status" value="1"/>
</dbReference>
<dbReference type="FunFam" id="1.25.10.10:FF:000505">
    <property type="entry name" value="HEAT repeat-containing protein 6 isoform X1"/>
    <property type="match status" value="1"/>
</dbReference>
<dbReference type="Gene3D" id="1.25.10.10">
    <property type="entry name" value="Leucine-rich Repeat Variant"/>
    <property type="match status" value="3"/>
</dbReference>
<dbReference type="InterPro" id="IPR011989">
    <property type="entry name" value="ARM-like"/>
</dbReference>
<dbReference type="InterPro" id="IPR016024">
    <property type="entry name" value="ARM-type_fold"/>
</dbReference>
<dbReference type="InterPro" id="IPR025283">
    <property type="entry name" value="DUF4042"/>
</dbReference>
<dbReference type="InterPro" id="IPR052107">
    <property type="entry name" value="HEAT6"/>
</dbReference>
<dbReference type="PANTHER" id="PTHR13366:SF0">
    <property type="entry name" value="HEAT REPEAT-CONTAINING PROTEIN 6"/>
    <property type="match status" value="1"/>
</dbReference>
<dbReference type="PANTHER" id="PTHR13366">
    <property type="entry name" value="MALARIA ANTIGEN-RELATED"/>
    <property type="match status" value="1"/>
</dbReference>
<dbReference type="Pfam" id="PF13251">
    <property type="entry name" value="DUF4042"/>
    <property type="match status" value="1"/>
</dbReference>
<dbReference type="SUPFAM" id="SSF48371">
    <property type="entry name" value="ARM repeat"/>
    <property type="match status" value="1"/>
</dbReference>
<organism>
    <name type="scientific">Pongo abelii</name>
    <name type="common">Sumatran orangutan</name>
    <name type="synonym">Pongo pygmaeus abelii</name>
    <dbReference type="NCBI Taxonomy" id="9601"/>
    <lineage>
        <taxon>Eukaryota</taxon>
        <taxon>Metazoa</taxon>
        <taxon>Chordata</taxon>
        <taxon>Craniata</taxon>
        <taxon>Vertebrata</taxon>
        <taxon>Euteleostomi</taxon>
        <taxon>Mammalia</taxon>
        <taxon>Eutheria</taxon>
        <taxon>Euarchontoglires</taxon>
        <taxon>Primates</taxon>
        <taxon>Haplorrhini</taxon>
        <taxon>Catarrhini</taxon>
        <taxon>Hominidae</taxon>
        <taxon>Pongo</taxon>
    </lineage>
</organism>
<feature type="chain" id="PRO_0000337175" description="HEAT repeat-containing protein 6">
    <location>
        <begin position="1"/>
        <end position="1181"/>
    </location>
</feature>
<feature type="repeat" description="HEAT 1">
    <location>
        <begin position="159"/>
        <end position="198"/>
    </location>
</feature>
<feature type="repeat" description="HEAT 2">
    <location>
        <begin position="452"/>
        <end position="490"/>
    </location>
</feature>
<feature type="repeat" description="HEAT 3">
    <location>
        <begin position="514"/>
        <end position="552"/>
    </location>
</feature>
<feature type="repeat" description="HEAT 4">
    <location>
        <begin position="558"/>
        <end position="595"/>
    </location>
</feature>
<feature type="region of interest" description="Disordered" evidence="3">
    <location>
        <begin position="294"/>
        <end position="347"/>
    </location>
</feature>
<feature type="region of interest" description="Disordered" evidence="3">
    <location>
        <begin position="371"/>
        <end position="407"/>
    </location>
</feature>
<feature type="region of interest" description="Disordered" evidence="3">
    <location>
        <begin position="613"/>
        <end position="648"/>
    </location>
</feature>
<feature type="compositionally biased region" description="Polar residues" evidence="3">
    <location>
        <begin position="300"/>
        <end position="312"/>
    </location>
</feature>
<feature type="compositionally biased region" description="Basic residues" evidence="3">
    <location>
        <begin position="313"/>
        <end position="325"/>
    </location>
</feature>
<feature type="compositionally biased region" description="Low complexity" evidence="3">
    <location>
        <begin position="383"/>
        <end position="399"/>
    </location>
</feature>
<feature type="compositionally biased region" description="Polar residues" evidence="3">
    <location>
        <begin position="637"/>
        <end position="646"/>
    </location>
</feature>
<feature type="modified residue" description="Phosphoserine" evidence="2">
    <location>
        <position position="336"/>
    </location>
</feature>
<feature type="modified residue" description="Phosphoserine" evidence="2">
    <location>
        <position position="337"/>
    </location>
</feature>
<feature type="modified residue" description="Phosphoserine" evidence="2">
    <location>
        <position position="399"/>
    </location>
</feature>
<feature type="modified residue" description="Phosphoserine" evidence="2">
    <location>
        <position position="402"/>
    </location>
</feature>
<feature type="modified residue" description="Phosphothreonine" evidence="1">
    <location>
        <position position="618"/>
    </location>
</feature>
<feature type="modified residue" description="Phosphoserine" evidence="2">
    <location>
        <position position="643"/>
    </location>
</feature>
<protein>
    <recommendedName>
        <fullName>HEAT repeat-containing protein 6</fullName>
    </recommendedName>
</protein>
<proteinExistence type="evidence at transcript level"/>
<reference key="1">
    <citation type="submission" date="2004-11" db="EMBL/GenBank/DDBJ databases">
        <authorList>
            <consortium name="The German cDNA consortium"/>
        </authorList>
    </citation>
    <scope>NUCLEOTIDE SEQUENCE [LARGE SCALE MRNA]</scope>
    <source>
        <tissue>Brain cortex</tissue>
    </source>
</reference>
<gene>
    <name type="primary">HEATR6</name>
</gene>
<name>HEAT6_PONAB</name>
<sequence length="1181" mass="128596">MAAVQVVGSLPSGQLREAPRDAIPEGGNGFRRLSARLCALRPDDSSSARTEIHLLFDQLISENYSEGSGVAPEDVSALLVQACRLVPLNQNHLVSKVSQLIHHLLNRLQVIVDEQRLDFLLAYTISAIHQCSSWTHMEILQALAALVYCNGSKCQKYLLELLGETGLLMKLSDLAQSDPEVRRAAVHCMANLCLSVPGQPYLEEPYQNVCFQAFLTILQSPKSSDMDDITFCMLLQNALKGIQSLLNGGRMKLTQTDELGALLAVLKKFMFHGLPGLNIEMPMVLYPTPLPQYDGRTPIKPQQSESSASRPTLNKKKKSKVKPKKIQQGEEEEKESSGEIEAAPVTGTGRVNLHEGNTWCPSSLGVQSLPLDGSGAAGKDGVSSPFSSSSWKRVSSSESDFSDAEGGMQSKMRSYQAKVRQVALVCFLSTIKSIEKKVLYGYWSAFIPDTPELGSPQSVSLMTLTLKDPSPKTRACALQVLSAILEGSKQFLSVAEDTSDHRRAFTPFSVMIASSIRELHRCLLLALVAESSSQTLTQIIKCLANLVSDAPYDRLKLSLLTKVWNQIKPYIRHKDVNVRVSSLTLLGAIVSTHAPLPEVQLLLQQPCSSGLSNSNSATPHLSPPDWWKKAPAGPSLEETSVSSPKGSSEPCWLIRLCISIVVLPKEDSCSGSDAGSAAGSTYEPSPMRLEALQVLTLLARGYFSMTQAYLMELGEVICKCMGEADPSIQLHGAKLLEELGTGLIQQYKPDSTAAPDQRAPVFLVVMFWTMMLNGPLPRALQNSEHPTLQAGACDALSSILPEAFSNLPKDRQILCITVLLGLNDSKNRLVKAATSRALGVYVLFPCLRQDVIFVADTANAILMSLEDKSLNVRANAAWSLGNLTDTLIVNMETPDPSFQEEFSGLLLLKMLRSAIEASKDKDKVKSNAVRALGNLLHFLQPSHIEKPTFAEIIEESIQALISTVLTEAAMKVRWNACYAMGNVFKNPALPLGTAPWTSQAYNALTSVVTSCKNFKVRIRSAAALSVPGKREQYGSVDQYAGIWNALVTALQKSEDTRDFLEFKYCASLRTQICQALIHLLNLASASDLPCIKETLELNGNMVQSYILQFIKSGAEGDDTGAPHSPQERDQMVRMALKHMGSIQAPTGDTARRAVMGFLEEILAVCFDSSGSQGALPGLTNQ</sequence>
<keyword id="KW-0597">Phosphoprotein</keyword>
<keyword id="KW-1185">Reference proteome</keyword>
<keyword id="KW-0677">Repeat</keyword>
<evidence type="ECO:0000250" key="1">
    <source>
        <dbReference type="UniProtKB" id="A1EC95"/>
    </source>
</evidence>
<evidence type="ECO:0000250" key="2">
    <source>
        <dbReference type="UniProtKB" id="Q6AI08"/>
    </source>
</evidence>
<evidence type="ECO:0000256" key="3">
    <source>
        <dbReference type="SAM" id="MobiDB-lite"/>
    </source>
</evidence>
<accession>Q5R5R2</accession>